<keyword id="KW-0539">Nucleus</keyword>
<keyword id="KW-1185">Reference proteome</keyword>
<keyword id="KW-0677">Repeat</keyword>
<keyword id="KW-0687">Ribonucleoprotein</keyword>
<keyword id="KW-0690">Ribosome biogenesis</keyword>
<keyword id="KW-0694">RNA-binding</keyword>
<keyword id="KW-0698">rRNA processing</keyword>
<feature type="chain" id="PRO_0000208558" description="Probable H/ACA ribonucleoprotein complex subunit 1-like protein">
    <location>
        <begin position="1"/>
        <end position="244"/>
    </location>
</feature>
<feature type="region of interest" description="Disordered" evidence="2">
    <location>
        <begin position="1"/>
        <end position="53"/>
    </location>
</feature>
<feature type="region of interest" description="RGG-box 1" evidence="5">
    <location>
        <begin position="4"/>
        <end position="51"/>
    </location>
</feature>
<feature type="region of interest" description="Disordered" evidence="2">
    <location>
        <begin position="145"/>
        <end position="244"/>
    </location>
</feature>
<feature type="region of interest" description="RGG-box 2" evidence="5">
    <location>
        <begin position="153"/>
        <end position="222"/>
    </location>
</feature>
<feature type="compositionally biased region" description="Basic and acidic residues" evidence="2">
    <location>
        <begin position="160"/>
        <end position="173"/>
    </location>
</feature>
<feature type="compositionally biased region" description="Gly residues" evidence="2">
    <location>
        <begin position="174"/>
        <end position="201"/>
    </location>
</feature>
<feature type="compositionally biased region" description="Gly residues" evidence="2">
    <location>
        <begin position="208"/>
        <end position="217"/>
    </location>
</feature>
<feature type="compositionally biased region" description="Basic and acidic residues" evidence="2">
    <location>
        <begin position="218"/>
        <end position="228"/>
    </location>
</feature>
<gene>
    <name evidence="6" type="primary">garr-1</name>
    <name evidence="6" type="ORF">Y66H1A.4</name>
</gene>
<sequence length="244" mass="24626">MSFRGGRGGGGGFRGGRGGGGGGGFRGGRGGDRGGGFRGGRGGFGGGGRGGYDQGPPEEVVLVGVFSHQCQDDIVCNNTSGKIPYFNAPIYFKNKEQVGKIDEIFGSPGENGFSVTLSQGVKASSFEPESQLYIDPGKLLPVDRFLPQAGGGRGRGGRGRGGDRGGRGSDRGGRGGFGRGGGGGFRGGDRGGFGGGRGGFRGGDRGGFRGGRGGDFGGRGRGDFKRSYDGGSFGGQNNKRTKFE</sequence>
<evidence type="ECO:0000250" key="1">
    <source>
        <dbReference type="UniProtKB" id="Q9NY12"/>
    </source>
</evidence>
<evidence type="ECO:0000256" key="2">
    <source>
        <dbReference type="SAM" id="MobiDB-lite"/>
    </source>
</evidence>
<evidence type="ECO:0000269" key="3">
    <source>
    </source>
</evidence>
<evidence type="ECO:0000305" key="4"/>
<evidence type="ECO:0000305" key="5">
    <source>
    </source>
</evidence>
<evidence type="ECO:0000312" key="6">
    <source>
        <dbReference type="WormBase" id="Y66H1A.4"/>
    </source>
</evidence>
<reference key="1">
    <citation type="journal article" date="1998" name="Science">
        <title>Genome sequence of the nematode C. elegans: a platform for investigating biology.</title>
        <authorList>
            <consortium name="The C. elegans sequencing consortium"/>
        </authorList>
    </citation>
    <scope>NUCLEOTIDE SEQUENCE [LARGE SCALE GENOMIC DNA]</scope>
    <source>
        <strain>Bristol N2</strain>
    </source>
</reference>
<reference key="2">
    <citation type="journal article" date="2022" name="Nat. Commun.">
        <title>RG/RGG repeats in the C. elegans homologs of Nucleolin and GAR1 contribute to sub-nucleolar phase separation.</title>
        <authorList>
            <person name="Spaulding E.L."/>
            <person name="Feidler A.M."/>
            <person name="Cook L.A."/>
            <person name="Updike D.L."/>
        </authorList>
    </citation>
    <scope>FUNCTION</scope>
    <scope>SUBCELLULAR LOCATION</scope>
    <scope>DOMAIN</scope>
</reference>
<name>GAR1_CAEEL</name>
<proteinExistence type="inferred from homology"/>
<dbReference type="EMBL" id="FO081659">
    <property type="protein sequence ID" value="CCD73147.1"/>
    <property type="molecule type" value="Genomic_DNA"/>
</dbReference>
<dbReference type="PIR" id="T33925">
    <property type="entry name" value="T33925"/>
</dbReference>
<dbReference type="RefSeq" id="NP_499927.2">
    <property type="nucleotide sequence ID" value="NM_067526.4"/>
</dbReference>
<dbReference type="SMR" id="Q9TYK1"/>
<dbReference type="BioGRID" id="42031">
    <property type="interactions" value="25"/>
</dbReference>
<dbReference type="FunCoup" id="Q9TYK1">
    <property type="interactions" value="960"/>
</dbReference>
<dbReference type="STRING" id="6239.Y66H1A.4.2"/>
<dbReference type="iPTMnet" id="Q9TYK1"/>
<dbReference type="PaxDb" id="6239-Y66H1A.4.2"/>
<dbReference type="PeptideAtlas" id="Q9TYK1"/>
<dbReference type="EnsemblMetazoa" id="Y66H1A.4.1">
    <property type="protein sequence ID" value="Y66H1A.4.1"/>
    <property type="gene ID" value="WBGene00022046"/>
</dbReference>
<dbReference type="GeneID" id="176870"/>
<dbReference type="KEGG" id="cel:CELE_Y66H1A.4"/>
<dbReference type="UCSC" id="Y66H1A.4.1">
    <property type="organism name" value="c. elegans"/>
</dbReference>
<dbReference type="AGR" id="WB:WBGene00022046"/>
<dbReference type="CTD" id="176870"/>
<dbReference type="WormBase" id="Y66H1A.4">
    <property type="protein sequence ID" value="CE36757"/>
    <property type="gene ID" value="WBGene00022046"/>
    <property type="gene designation" value="garr-1"/>
</dbReference>
<dbReference type="eggNOG" id="KOG3262">
    <property type="taxonomic scope" value="Eukaryota"/>
</dbReference>
<dbReference type="GeneTree" id="ENSGT00730000111223"/>
<dbReference type="HOGENOM" id="CLU_080002_0_0_1"/>
<dbReference type="InParanoid" id="Q9TYK1"/>
<dbReference type="OMA" id="YFTHPCE"/>
<dbReference type="OrthoDB" id="2187159at2759"/>
<dbReference type="CD-CODE" id="07A7ED5B">
    <property type="entry name" value="Synthetic Condensate 000060"/>
</dbReference>
<dbReference type="CD-CODE" id="EE0382A7">
    <property type="entry name" value="P-body"/>
</dbReference>
<dbReference type="PRO" id="PR:Q9TYK1"/>
<dbReference type="Proteomes" id="UP000001940">
    <property type="component" value="Chromosome IV"/>
</dbReference>
<dbReference type="Bgee" id="WBGene00022046">
    <property type="expression patterns" value="Expressed in adult organism and 4 other cell types or tissues"/>
</dbReference>
<dbReference type="GO" id="GO:0031429">
    <property type="term" value="C:box H/ACA snoRNP complex"/>
    <property type="evidence" value="ECO:0000318"/>
    <property type="project" value="GO_Central"/>
</dbReference>
<dbReference type="GO" id="GO:0034513">
    <property type="term" value="F:box H/ACA snoRNA binding"/>
    <property type="evidence" value="ECO:0000318"/>
    <property type="project" value="GO_Central"/>
</dbReference>
<dbReference type="GO" id="GO:0000454">
    <property type="term" value="P:snoRNA guided rRNA pseudouridine synthesis"/>
    <property type="evidence" value="ECO:0000318"/>
    <property type="project" value="GO_Central"/>
</dbReference>
<dbReference type="FunFam" id="2.40.10.230:FF:000001">
    <property type="entry name" value="H/ACA ribonucleoprotein complex subunit"/>
    <property type="match status" value="1"/>
</dbReference>
<dbReference type="Gene3D" id="2.40.10.230">
    <property type="entry name" value="Probable tRNA pseudouridine synthase domain"/>
    <property type="match status" value="1"/>
</dbReference>
<dbReference type="InterPro" id="IPR038664">
    <property type="entry name" value="Gar1/Naf1_Cbf5-bd_sf"/>
</dbReference>
<dbReference type="InterPro" id="IPR007504">
    <property type="entry name" value="H/ACA_rnp_Gar1/Naf1"/>
</dbReference>
<dbReference type="InterPro" id="IPR009000">
    <property type="entry name" value="Transl_B-barrel_sf"/>
</dbReference>
<dbReference type="PANTHER" id="PTHR23237:SF6">
    <property type="entry name" value="H_ACA RIBONUCLEOPROTEIN COMPLEX SUBUNIT 1"/>
    <property type="match status" value="1"/>
</dbReference>
<dbReference type="PANTHER" id="PTHR23237">
    <property type="entry name" value="NUCLEOLAR PROTEIN FAMILY A MEMBER 1 SNORNP PROTEIN GAR1"/>
    <property type="match status" value="1"/>
</dbReference>
<dbReference type="Pfam" id="PF04410">
    <property type="entry name" value="Gar1"/>
    <property type="match status" value="1"/>
</dbReference>
<dbReference type="SUPFAM" id="SSF50447">
    <property type="entry name" value="Translation proteins"/>
    <property type="match status" value="1"/>
</dbReference>
<accession>Q9TYK1</accession>
<comment type="function">
    <text evidence="1 3">Required for ribosome biogenesis. Part of a complex which catalyzes pseudouridylation of rRNA. This involves the isomerization of uridine such that the ribose is subsequently attached to C5, instead of the normal N1. Pseudouridine ('psi') residues may serve to stabilize the conformation of rRNAs (By similarity). Involved in phase separation into sub-nucleolar condensates (PubMed:36329008). Essential for normal development and also plays a role in fertility (PubMed:36329008).</text>
</comment>
<comment type="subunit">
    <text evidence="1">Component of the small nucleolar ribonucleoprotein particle containing H/ACA-type snoRNAs (H/ACA snoRNPs).</text>
</comment>
<comment type="subcellular location">
    <subcellularLocation>
        <location evidence="3">Nucleus</location>
        <location evidence="3">Nucleolus</location>
    </subcellularLocation>
    <text evidence="3">Localizes to a sub-nucleolar compartment, the innermost fibrillar center (FC), in pachytene germ cells (PubMed:36329008). Co-localizes with rRNA 2'-O-methyltransferase fib-1 in nucleoli (PubMed:36329008).</text>
</comment>
<comment type="domain">
    <text evidence="3">Arginine-glycine RGG-box regions play a role in sub-nucleolar compartmentalization (PubMed:36329008). Dispensable for nucleolar accumulation (PubMed:36329008). Both regions are essential for fertility and development (PubMed:36329008).</text>
</comment>
<comment type="similarity">
    <text evidence="4">Belongs to the GAR1 family.</text>
</comment>
<organism>
    <name type="scientific">Caenorhabditis elegans</name>
    <dbReference type="NCBI Taxonomy" id="6239"/>
    <lineage>
        <taxon>Eukaryota</taxon>
        <taxon>Metazoa</taxon>
        <taxon>Ecdysozoa</taxon>
        <taxon>Nematoda</taxon>
        <taxon>Chromadorea</taxon>
        <taxon>Rhabditida</taxon>
        <taxon>Rhabditina</taxon>
        <taxon>Rhabditomorpha</taxon>
        <taxon>Rhabditoidea</taxon>
        <taxon>Rhabditidae</taxon>
        <taxon>Peloderinae</taxon>
        <taxon>Caenorhabditis</taxon>
    </lineage>
</organism>
<protein>
    <recommendedName>
        <fullName>Probable H/ACA ribonucleoprotein complex subunit 1-like protein</fullName>
    </recommendedName>
</protein>